<accession>B5VQN1</accession>
<dbReference type="EMBL" id="ABSV01001977">
    <property type="protein sequence ID" value="EDZ69767.1"/>
    <property type="molecule type" value="Genomic_DNA"/>
</dbReference>
<dbReference type="SMR" id="B5VQN1"/>
<dbReference type="GlyCosmos" id="B5VQN1">
    <property type="glycosylation" value="6 sites, No reported glycans"/>
</dbReference>
<dbReference type="Proteomes" id="UP000008988">
    <property type="component" value="Unassembled WGS sequence"/>
</dbReference>
<dbReference type="GO" id="GO:0005774">
    <property type="term" value="C:vacuolar membrane"/>
    <property type="evidence" value="ECO:0007669"/>
    <property type="project" value="UniProtKB-SubCell"/>
</dbReference>
<gene>
    <name type="primary">TDA7</name>
    <name type="ORF">AWRI1631_141530</name>
</gene>
<protein>
    <recommendedName>
        <fullName>Topoisomerase I damage affected protein 7</fullName>
    </recommendedName>
</protein>
<evidence type="ECO:0000250" key="1"/>
<evidence type="ECO:0000250" key="2">
    <source>
        <dbReference type="UniProtKB" id="P53882"/>
    </source>
</evidence>
<evidence type="ECO:0000255" key="3"/>
<evidence type="ECO:0000256" key="4">
    <source>
        <dbReference type="SAM" id="MobiDB-lite"/>
    </source>
</evidence>
<evidence type="ECO:0000305" key="5"/>
<proteinExistence type="inferred from homology"/>
<name>TDA7_YEAS6</name>
<keyword id="KW-0325">Glycoprotein</keyword>
<keyword id="KW-1017">Isopeptide bond</keyword>
<keyword id="KW-0472">Membrane</keyword>
<keyword id="KW-0597">Phosphoprotein</keyword>
<keyword id="KW-0812">Transmembrane</keyword>
<keyword id="KW-1133">Transmembrane helix</keyword>
<keyword id="KW-0832">Ubl conjugation</keyword>
<keyword id="KW-0926">Vacuole</keyword>
<organism>
    <name type="scientific">Saccharomyces cerevisiae (strain AWRI1631)</name>
    <name type="common">Baker's yeast</name>
    <dbReference type="NCBI Taxonomy" id="545124"/>
    <lineage>
        <taxon>Eukaryota</taxon>
        <taxon>Fungi</taxon>
        <taxon>Dikarya</taxon>
        <taxon>Ascomycota</taxon>
        <taxon>Saccharomycotina</taxon>
        <taxon>Saccharomycetes</taxon>
        <taxon>Saccharomycetales</taxon>
        <taxon>Saccharomycetaceae</taxon>
        <taxon>Saccharomyces</taxon>
    </lineage>
</organism>
<reference key="1">
    <citation type="journal article" date="2008" name="FEMS Yeast Res.">
        <title>Comparative genome analysis of a Saccharomyces cerevisiae wine strain.</title>
        <authorList>
            <person name="Borneman A.R."/>
            <person name="Forgan A.H."/>
            <person name="Pretorius I.S."/>
            <person name="Chambers P.J."/>
        </authorList>
    </citation>
    <scope>NUCLEOTIDE SEQUENCE [LARGE SCALE GENOMIC DNA]</scope>
    <source>
        <strain>AWRI1631</strain>
    </source>
</reference>
<sequence length="636" mass="67389">MNSNSTIGRTTLGESDTISLSFSEPSSSLNSRSTDVVFASTSTLVPQQGSLTSLPPVSSTATPTYYSTSLTYDETLHTSIDVSSTSTLVSSTDSSSSSEQDTYSSQYDPATSSYSIITPSMSIFSSTSPMSSSSSITSEWSSLTSTTPTLSSSATSLSSSWSSLSSPSSLLVSSSLSLSLSSSYSDTKLFSFDSRSSIFSPSTPTVISPSYTYLSSISATSFQISTTSELSSSWFSTISSPSTTSNKDTTFPSSSRNTSTSFYSSSLSSTNDFSTISKSSKLSPSASSSTVSISTISVPTSSSVSSSSSKVPSNRPSSSSSSDDTTSAYSSTYTFQSLQSTTSSSIPPTTQTPSTSTISTSPIPTSSQVFNTVAISSSEDSKTIYYFYTQTYDITDSSTTFVTGLPTTIAVAKSEVTSFSAPSSTITADMSFYQHWLDGSLDNNKNQGTSKTNTGTIVGSVVGSVGGILICVLVVWFMLVRKRKAKRHFKENDSFCHEIGRRTGFPTTAQAKEASLQAQDSGSQQRNTETASANNPFSNEFNFKARGNPPPVPPPRNVTAMNGSFQNMRSNFMDQENRFSYGSSFTYSSLGSSTQGGFSTLSSNSIRLGRGLDNDISHDERNTVQNNSQGFLREII</sequence>
<comment type="subcellular location">
    <subcellularLocation>
        <location evidence="1">Vacuole membrane</location>
        <topology evidence="1">Single-pass membrane protein</topology>
    </subcellularLocation>
</comment>
<comment type="similarity">
    <text evidence="5">Belongs to the TDA7 family.</text>
</comment>
<feature type="chain" id="PRO_0000410748" description="Topoisomerase I damage affected protein 7">
    <location>
        <begin position="1"/>
        <end position="636"/>
    </location>
</feature>
<feature type="transmembrane region" description="Helical" evidence="3">
    <location>
        <begin position="457"/>
        <end position="477"/>
    </location>
</feature>
<feature type="region of interest" description="Disordered" evidence="4">
    <location>
        <begin position="1"/>
        <end position="33"/>
    </location>
</feature>
<feature type="region of interest" description="Disordered" evidence="4">
    <location>
        <begin position="87"/>
        <end position="109"/>
    </location>
</feature>
<feature type="region of interest" description="Disordered" evidence="4">
    <location>
        <begin position="238"/>
        <end position="271"/>
    </location>
</feature>
<feature type="region of interest" description="Disordered" evidence="4">
    <location>
        <begin position="299"/>
        <end position="326"/>
    </location>
</feature>
<feature type="region of interest" description="Disordered" evidence="4">
    <location>
        <begin position="339"/>
        <end position="362"/>
    </location>
</feature>
<feature type="region of interest" description="Disordered" evidence="4">
    <location>
        <begin position="510"/>
        <end position="551"/>
    </location>
</feature>
<feature type="compositionally biased region" description="Polar residues" evidence="4">
    <location>
        <begin position="1"/>
        <end position="18"/>
    </location>
</feature>
<feature type="compositionally biased region" description="Low complexity" evidence="4">
    <location>
        <begin position="19"/>
        <end position="33"/>
    </location>
</feature>
<feature type="compositionally biased region" description="Low complexity" evidence="4">
    <location>
        <begin position="87"/>
        <end position="108"/>
    </location>
</feature>
<feature type="compositionally biased region" description="Polar residues" evidence="4">
    <location>
        <begin position="510"/>
        <end position="541"/>
    </location>
</feature>
<feature type="modified residue" description="Phosphoserine" evidence="2">
    <location>
        <position position="628"/>
    </location>
</feature>
<feature type="glycosylation site" description="N-linked (GlcNAc...) asparagine" evidence="3">
    <location>
        <position position="4"/>
    </location>
</feature>
<feature type="glycosylation site" description="N-linked (GlcNAc...) asparagine" evidence="3">
    <location>
        <position position="257"/>
    </location>
</feature>
<feature type="glycosylation site" description="N-linked (GlcNAc...) asparagine" evidence="3">
    <location>
        <position position="492"/>
    </location>
</feature>
<feature type="glycosylation site" description="N-linked (GlcNAc...) asparagine" evidence="3">
    <location>
        <position position="557"/>
    </location>
</feature>
<feature type="glycosylation site" description="N-linked (GlcNAc...) asparagine" evidence="3">
    <location>
        <position position="562"/>
    </location>
</feature>
<feature type="glycosylation site" description="N-linked (GlcNAc...) asparagine" evidence="3">
    <location>
        <position position="626"/>
    </location>
</feature>
<feature type="cross-link" description="Glycyl lysine isopeptide (Lys-Gly) (interchain with G-Cter in ubiquitin)" evidence="2">
    <location>
        <position position="512"/>
    </location>
</feature>